<reference key="1">
    <citation type="journal article" date="2004" name="J. Bacteriol.">
        <title>Comparative genomics of two Leptospira interrogans serovars reveals novel insights into physiology and pathogenesis.</title>
        <authorList>
            <person name="Nascimento A.L.T.O."/>
            <person name="Ko A.I."/>
            <person name="Martins E.A.L."/>
            <person name="Monteiro-Vitorello C.B."/>
            <person name="Ho P.L."/>
            <person name="Haake D.A."/>
            <person name="Verjovski-Almeida S."/>
            <person name="Hartskeerl R.A."/>
            <person name="Marques M.V."/>
            <person name="Oliveira M.C."/>
            <person name="Menck C.F.M."/>
            <person name="Leite L.C.C."/>
            <person name="Carrer H."/>
            <person name="Coutinho L.L."/>
            <person name="Degrave W.M."/>
            <person name="Dellagostin O.A."/>
            <person name="El-Dorry H."/>
            <person name="Ferro E.S."/>
            <person name="Ferro M.I.T."/>
            <person name="Furlan L.R."/>
            <person name="Gamberini M."/>
            <person name="Giglioti E.A."/>
            <person name="Goes-Neto A."/>
            <person name="Goldman G.H."/>
            <person name="Goldman M.H.S."/>
            <person name="Harakava R."/>
            <person name="Jeronimo S.M.B."/>
            <person name="Junqueira-de-Azevedo I.L.M."/>
            <person name="Kimura E.T."/>
            <person name="Kuramae E.E."/>
            <person name="Lemos E.G.M."/>
            <person name="Lemos M.V.F."/>
            <person name="Marino C.L."/>
            <person name="Nunes L.R."/>
            <person name="de Oliveira R.C."/>
            <person name="Pereira G.G."/>
            <person name="Reis M.S."/>
            <person name="Schriefer A."/>
            <person name="Siqueira W.J."/>
            <person name="Sommer P."/>
            <person name="Tsai S.M."/>
            <person name="Simpson A.J.G."/>
            <person name="Ferro J.A."/>
            <person name="Camargo L.E.A."/>
            <person name="Kitajima J.P."/>
            <person name="Setubal J.C."/>
            <person name="Van Sluys M.A."/>
        </authorList>
    </citation>
    <scope>NUCLEOTIDE SEQUENCE [LARGE SCALE GENOMIC DNA]</scope>
    <source>
        <strain>Fiocruz L1-130</strain>
    </source>
</reference>
<comment type="function">
    <text evidence="1">Involved in peptide bond synthesis. Stimulates efficient translation and peptide-bond synthesis on native or reconstituted 70S ribosomes in vitro. Probably functions indirectly by altering the affinity of the ribosome for aminoacyl-tRNA, thus increasing their reactivity as acceptors for peptidyl transferase.</text>
</comment>
<comment type="pathway">
    <text evidence="1">Protein biosynthesis; polypeptide chain elongation.</text>
</comment>
<comment type="subcellular location">
    <subcellularLocation>
        <location evidence="1">Cytoplasm</location>
    </subcellularLocation>
</comment>
<comment type="similarity">
    <text evidence="1">Belongs to the elongation factor P family.</text>
</comment>
<accession>P0C099</accession>
<keyword id="KW-0963">Cytoplasm</keyword>
<keyword id="KW-0251">Elongation factor</keyword>
<keyword id="KW-0648">Protein biosynthesis</keyword>
<proteinExistence type="inferred from homology"/>
<protein>
    <recommendedName>
        <fullName evidence="1">Elongation factor P</fullName>
        <shortName evidence="1">EF-P</shortName>
    </recommendedName>
</protein>
<gene>
    <name evidence="1" type="primary">efp</name>
    <name type="ordered locus">LIC_20228</name>
</gene>
<dbReference type="EMBL" id="AE016824">
    <property type="status" value="NOT_ANNOTATED_CDS"/>
    <property type="molecule type" value="Genomic_DNA"/>
</dbReference>
<dbReference type="RefSeq" id="WP_000172195.1">
    <property type="nucleotide sequence ID" value="NC_005824.1"/>
</dbReference>
<dbReference type="SMR" id="P0C099"/>
<dbReference type="GeneID" id="61141426"/>
<dbReference type="UniPathway" id="UPA00345"/>
<dbReference type="Proteomes" id="UP000007037">
    <property type="component" value="Chromosome II"/>
</dbReference>
<dbReference type="GO" id="GO:0005737">
    <property type="term" value="C:cytoplasm"/>
    <property type="evidence" value="ECO:0007669"/>
    <property type="project" value="UniProtKB-SubCell"/>
</dbReference>
<dbReference type="GO" id="GO:0003746">
    <property type="term" value="F:translation elongation factor activity"/>
    <property type="evidence" value="ECO:0007669"/>
    <property type="project" value="UniProtKB-UniRule"/>
</dbReference>
<dbReference type="GO" id="GO:0043043">
    <property type="term" value="P:peptide biosynthetic process"/>
    <property type="evidence" value="ECO:0007669"/>
    <property type="project" value="InterPro"/>
</dbReference>
<dbReference type="CDD" id="cd04470">
    <property type="entry name" value="S1_EF-P_repeat_1"/>
    <property type="match status" value="1"/>
</dbReference>
<dbReference type="CDD" id="cd05794">
    <property type="entry name" value="S1_EF-P_repeat_2"/>
    <property type="match status" value="1"/>
</dbReference>
<dbReference type="FunFam" id="2.30.30.30:FF:000003">
    <property type="entry name" value="Elongation factor P"/>
    <property type="match status" value="1"/>
</dbReference>
<dbReference type="FunFam" id="2.40.50.140:FF:000004">
    <property type="entry name" value="Elongation factor P"/>
    <property type="match status" value="1"/>
</dbReference>
<dbReference type="FunFam" id="2.40.50.140:FF:000009">
    <property type="entry name" value="Elongation factor P"/>
    <property type="match status" value="1"/>
</dbReference>
<dbReference type="Gene3D" id="2.30.30.30">
    <property type="match status" value="1"/>
</dbReference>
<dbReference type="Gene3D" id="2.40.50.140">
    <property type="entry name" value="Nucleic acid-binding proteins"/>
    <property type="match status" value="2"/>
</dbReference>
<dbReference type="HAMAP" id="MF_00141">
    <property type="entry name" value="EF_P"/>
    <property type="match status" value="1"/>
</dbReference>
<dbReference type="InterPro" id="IPR015365">
    <property type="entry name" value="Elong-fact-P_C"/>
</dbReference>
<dbReference type="InterPro" id="IPR012340">
    <property type="entry name" value="NA-bd_OB-fold"/>
</dbReference>
<dbReference type="InterPro" id="IPR014722">
    <property type="entry name" value="Rib_uL2_dom2"/>
</dbReference>
<dbReference type="InterPro" id="IPR020599">
    <property type="entry name" value="Transl_elong_fac_P/YeiP"/>
</dbReference>
<dbReference type="InterPro" id="IPR013185">
    <property type="entry name" value="Transl_elong_KOW-like"/>
</dbReference>
<dbReference type="InterPro" id="IPR001059">
    <property type="entry name" value="Transl_elong_P/YeiP_cen"/>
</dbReference>
<dbReference type="InterPro" id="IPR011768">
    <property type="entry name" value="Transl_elongation_fac_P"/>
</dbReference>
<dbReference type="InterPro" id="IPR008991">
    <property type="entry name" value="Translation_prot_SH3-like_sf"/>
</dbReference>
<dbReference type="NCBIfam" id="TIGR00038">
    <property type="entry name" value="efp"/>
    <property type="match status" value="1"/>
</dbReference>
<dbReference type="NCBIfam" id="NF001810">
    <property type="entry name" value="PRK00529.1"/>
    <property type="match status" value="1"/>
</dbReference>
<dbReference type="PANTHER" id="PTHR30053">
    <property type="entry name" value="ELONGATION FACTOR P"/>
    <property type="match status" value="1"/>
</dbReference>
<dbReference type="PANTHER" id="PTHR30053:SF12">
    <property type="entry name" value="ELONGATION FACTOR P (EF-P) FAMILY PROTEIN"/>
    <property type="match status" value="1"/>
</dbReference>
<dbReference type="Pfam" id="PF01132">
    <property type="entry name" value="EFP"/>
    <property type="match status" value="1"/>
</dbReference>
<dbReference type="Pfam" id="PF08207">
    <property type="entry name" value="EFP_N"/>
    <property type="match status" value="1"/>
</dbReference>
<dbReference type="Pfam" id="PF09285">
    <property type="entry name" value="Elong-fact-P_C"/>
    <property type="match status" value="1"/>
</dbReference>
<dbReference type="PIRSF" id="PIRSF005901">
    <property type="entry name" value="EF-P"/>
    <property type="match status" value="1"/>
</dbReference>
<dbReference type="SMART" id="SM01185">
    <property type="entry name" value="EFP"/>
    <property type="match status" value="1"/>
</dbReference>
<dbReference type="SMART" id="SM00841">
    <property type="entry name" value="Elong-fact-P_C"/>
    <property type="match status" value="1"/>
</dbReference>
<dbReference type="SUPFAM" id="SSF50249">
    <property type="entry name" value="Nucleic acid-binding proteins"/>
    <property type="match status" value="2"/>
</dbReference>
<dbReference type="SUPFAM" id="SSF50104">
    <property type="entry name" value="Translation proteins SH3-like domain"/>
    <property type="match status" value="1"/>
</dbReference>
<name>EFP_LEPIC</name>
<sequence>MTLGITEVKKGMVLKVEGDLYSVVKTEFVNPGKGSAFIRTKLKNLTRNSSIERTFKAAEKLESVELEKRNMTICYTEGDDIIFMDSNDFEQMPVSKEYVEDILPFLKEETPMEVTFYEGKPIGVIPPNFSILEVTYAEEGLKGDTSGTAQKRITVETGGEINVPIFVKQGDVIKIDLRDLTYVERVSK</sequence>
<organism>
    <name type="scientific">Leptospira interrogans serogroup Icterohaemorrhagiae serovar copenhageni (strain Fiocruz L1-130)</name>
    <dbReference type="NCBI Taxonomy" id="267671"/>
    <lineage>
        <taxon>Bacteria</taxon>
        <taxon>Pseudomonadati</taxon>
        <taxon>Spirochaetota</taxon>
        <taxon>Spirochaetia</taxon>
        <taxon>Leptospirales</taxon>
        <taxon>Leptospiraceae</taxon>
        <taxon>Leptospira</taxon>
    </lineage>
</organism>
<evidence type="ECO:0000255" key="1">
    <source>
        <dbReference type="HAMAP-Rule" id="MF_00141"/>
    </source>
</evidence>
<feature type="chain" id="PRO_0000094273" description="Elongation factor P">
    <location>
        <begin position="1"/>
        <end position="188"/>
    </location>
</feature>